<evidence type="ECO:0000255" key="1">
    <source>
        <dbReference type="HAMAP-Rule" id="MF_00639"/>
    </source>
</evidence>
<name>MURD_STAAW</name>
<sequence>MLNYTGLENKNVLVVGLAKSGYEAAKLLSKLGANVTVNDGKDLSQDAHVKDLESMGISVVSGSHPLTLLDNNPIIVKNPGIPYTVSIIDEAVKRGLKILTEVELSYLISEAPIIAVTGTNGKTTVTSLIGDMFKKSRLTGRLSGNIGYVASKVAQEVKPTDYLVTELSSFQLLGIEKYKPHIAIITNIYSAHLDYHENLENYQNAKKQIYKNQTEEDYLICNYHQRQVIESEELKAKTLYFSTQQEVDGIYIKDGFIIYKGVRIINTEDLVLPGEHNLENILAAVLACILAGVPIKAIIDSLTTFSGIEHRLQYVGTNRTNKYYNDSKATNTLATQFALNSFNQPIIWLCGGLDRGNEFDELIPYMENVRAMVVFGQTKAKFAKLGNSQGKSVIEANNVEDAVDKVQDIIEPNDVVLLSPACASWDQYSTFEERGEKFIERFRAHLPSY</sequence>
<keyword id="KW-0067">ATP-binding</keyword>
<keyword id="KW-0131">Cell cycle</keyword>
<keyword id="KW-0132">Cell division</keyword>
<keyword id="KW-0133">Cell shape</keyword>
<keyword id="KW-0961">Cell wall biogenesis/degradation</keyword>
<keyword id="KW-0963">Cytoplasm</keyword>
<keyword id="KW-0436">Ligase</keyword>
<keyword id="KW-0547">Nucleotide-binding</keyword>
<keyword id="KW-0573">Peptidoglycan synthesis</keyword>
<reference key="1">
    <citation type="journal article" date="2002" name="Lancet">
        <title>Genome and virulence determinants of high virulence community-acquired MRSA.</title>
        <authorList>
            <person name="Baba T."/>
            <person name="Takeuchi F."/>
            <person name="Kuroda M."/>
            <person name="Yuzawa H."/>
            <person name="Aoki K."/>
            <person name="Oguchi A."/>
            <person name="Nagai Y."/>
            <person name="Iwama N."/>
            <person name="Asano K."/>
            <person name="Naimi T."/>
            <person name="Kuroda H."/>
            <person name="Cui L."/>
            <person name="Yamamoto K."/>
            <person name="Hiramatsu K."/>
        </authorList>
    </citation>
    <scope>NUCLEOTIDE SEQUENCE [LARGE SCALE GENOMIC DNA]</scope>
    <source>
        <strain>MW2</strain>
    </source>
</reference>
<dbReference type="EC" id="6.3.2.9" evidence="1"/>
<dbReference type="EMBL" id="BA000033">
    <property type="protein sequence ID" value="BAB94931.1"/>
    <property type="molecule type" value="Genomic_DNA"/>
</dbReference>
<dbReference type="RefSeq" id="WP_000936001.1">
    <property type="nucleotide sequence ID" value="NC_003923.1"/>
</dbReference>
<dbReference type="SMR" id="Q8NX35"/>
<dbReference type="KEGG" id="sam:MW1066"/>
<dbReference type="HOGENOM" id="CLU_032540_0_1_9"/>
<dbReference type="UniPathway" id="UPA00219"/>
<dbReference type="GO" id="GO:0005737">
    <property type="term" value="C:cytoplasm"/>
    <property type="evidence" value="ECO:0007669"/>
    <property type="project" value="UniProtKB-SubCell"/>
</dbReference>
<dbReference type="GO" id="GO:0005524">
    <property type="term" value="F:ATP binding"/>
    <property type="evidence" value="ECO:0007669"/>
    <property type="project" value="UniProtKB-UniRule"/>
</dbReference>
<dbReference type="GO" id="GO:0008764">
    <property type="term" value="F:UDP-N-acetylmuramoylalanine-D-glutamate ligase activity"/>
    <property type="evidence" value="ECO:0007669"/>
    <property type="project" value="UniProtKB-UniRule"/>
</dbReference>
<dbReference type="GO" id="GO:0051301">
    <property type="term" value="P:cell division"/>
    <property type="evidence" value="ECO:0007669"/>
    <property type="project" value="UniProtKB-KW"/>
</dbReference>
<dbReference type="GO" id="GO:0071555">
    <property type="term" value="P:cell wall organization"/>
    <property type="evidence" value="ECO:0007669"/>
    <property type="project" value="UniProtKB-KW"/>
</dbReference>
<dbReference type="GO" id="GO:0009252">
    <property type="term" value="P:peptidoglycan biosynthetic process"/>
    <property type="evidence" value="ECO:0007669"/>
    <property type="project" value="UniProtKB-UniRule"/>
</dbReference>
<dbReference type="GO" id="GO:0008360">
    <property type="term" value="P:regulation of cell shape"/>
    <property type="evidence" value="ECO:0007669"/>
    <property type="project" value="UniProtKB-KW"/>
</dbReference>
<dbReference type="Gene3D" id="3.90.190.20">
    <property type="entry name" value="Mur ligase, C-terminal domain"/>
    <property type="match status" value="1"/>
</dbReference>
<dbReference type="Gene3D" id="3.40.1190.10">
    <property type="entry name" value="Mur-like, catalytic domain"/>
    <property type="match status" value="1"/>
</dbReference>
<dbReference type="Gene3D" id="3.40.50.720">
    <property type="entry name" value="NAD(P)-binding Rossmann-like Domain"/>
    <property type="match status" value="1"/>
</dbReference>
<dbReference type="HAMAP" id="MF_00639">
    <property type="entry name" value="MurD"/>
    <property type="match status" value="1"/>
</dbReference>
<dbReference type="InterPro" id="IPR036565">
    <property type="entry name" value="Mur-like_cat_sf"/>
</dbReference>
<dbReference type="InterPro" id="IPR004101">
    <property type="entry name" value="Mur_ligase_C"/>
</dbReference>
<dbReference type="InterPro" id="IPR036615">
    <property type="entry name" value="Mur_ligase_C_dom_sf"/>
</dbReference>
<dbReference type="InterPro" id="IPR013221">
    <property type="entry name" value="Mur_ligase_cen"/>
</dbReference>
<dbReference type="InterPro" id="IPR005762">
    <property type="entry name" value="MurD"/>
</dbReference>
<dbReference type="NCBIfam" id="TIGR01087">
    <property type="entry name" value="murD"/>
    <property type="match status" value="1"/>
</dbReference>
<dbReference type="PANTHER" id="PTHR43692">
    <property type="entry name" value="UDP-N-ACETYLMURAMOYLALANINE--D-GLUTAMATE LIGASE"/>
    <property type="match status" value="1"/>
</dbReference>
<dbReference type="PANTHER" id="PTHR43692:SF1">
    <property type="entry name" value="UDP-N-ACETYLMURAMOYLALANINE--D-GLUTAMATE LIGASE"/>
    <property type="match status" value="1"/>
</dbReference>
<dbReference type="Pfam" id="PF02875">
    <property type="entry name" value="Mur_ligase_C"/>
    <property type="match status" value="1"/>
</dbReference>
<dbReference type="Pfam" id="PF08245">
    <property type="entry name" value="Mur_ligase_M"/>
    <property type="match status" value="1"/>
</dbReference>
<dbReference type="Pfam" id="PF21799">
    <property type="entry name" value="MurD-like_N"/>
    <property type="match status" value="1"/>
</dbReference>
<dbReference type="SUPFAM" id="SSF51984">
    <property type="entry name" value="MurCD N-terminal domain"/>
    <property type="match status" value="1"/>
</dbReference>
<dbReference type="SUPFAM" id="SSF53623">
    <property type="entry name" value="MurD-like peptide ligases, catalytic domain"/>
    <property type="match status" value="1"/>
</dbReference>
<dbReference type="SUPFAM" id="SSF53244">
    <property type="entry name" value="MurD-like peptide ligases, peptide-binding domain"/>
    <property type="match status" value="1"/>
</dbReference>
<protein>
    <recommendedName>
        <fullName evidence="1">UDP-N-acetylmuramoylalanine--D-glutamate ligase</fullName>
        <ecNumber evidence="1">6.3.2.9</ecNumber>
    </recommendedName>
    <alternativeName>
        <fullName evidence="1">D-glutamic acid-adding enzyme</fullName>
    </alternativeName>
    <alternativeName>
        <fullName evidence="1">UDP-N-acetylmuramoyl-L-alanyl-D-glutamate synthetase</fullName>
    </alternativeName>
</protein>
<accession>Q8NX35</accession>
<gene>
    <name evidence="1" type="primary">murD</name>
    <name type="ordered locus">MW1066</name>
</gene>
<organism>
    <name type="scientific">Staphylococcus aureus (strain MW2)</name>
    <dbReference type="NCBI Taxonomy" id="196620"/>
    <lineage>
        <taxon>Bacteria</taxon>
        <taxon>Bacillati</taxon>
        <taxon>Bacillota</taxon>
        <taxon>Bacilli</taxon>
        <taxon>Bacillales</taxon>
        <taxon>Staphylococcaceae</taxon>
        <taxon>Staphylococcus</taxon>
    </lineage>
</organism>
<proteinExistence type="inferred from homology"/>
<feature type="chain" id="PRO_0000109088" description="UDP-N-acetylmuramoylalanine--D-glutamate ligase">
    <location>
        <begin position="1"/>
        <end position="449"/>
    </location>
</feature>
<feature type="binding site" evidence="1">
    <location>
        <begin position="118"/>
        <end position="124"/>
    </location>
    <ligand>
        <name>ATP</name>
        <dbReference type="ChEBI" id="CHEBI:30616"/>
    </ligand>
</feature>
<comment type="function">
    <text evidence="1">Cell wall formation. Catalyzes the addition of glutamate to the nucleotide precursor UDP-N-acetylmuramoyl-L-alanine (UMA).</text>
</comment>
<comment type="catalytic activity">
    <reaction evidence="1">
        <text>UDP-N-acetyl-alpha-D-muramoyl-L-alanine + D-glutamate + ATP = UDP-N-acetyl-alpha-D-muramoyl-L-alanyl-D-glutamate + ADP + phosphate + H(+)</text>
        <dbReference type="Rhea" id="RHEA:16429"/>
        <dbReference type="ChEBI" id="CHEBI:15378"/>
        <dbReference type="ChEBI" id="CHEBI:29986"/>
        <dbReference type="ChEBI" id="CHEBI:30616"/>
        <dbReference type="ChEBI" id="CHEBI:43474"/>
        <dbReference type="ChEBI" id="CHEBI:83898"/>
        <dbReference type="ChEBI" id="CHEBI:83900"/>
        <dbReference type="ChEBI" id="CHEBI:456216"/>
        <dbReference type="EC" id="6.3.2.9"/>
    </reaction>
</comment>
<comment type="pathway">
    <text evidence="1">Cell wall biogenesis; peptidoglycan biosynthesis.</text>
</comment>
<comment type="subcellular location">
    <subcellularLocation>
        <location evidence="1">Cytoplasm</location>
    </subcellularLocation>
</comment>
<comment type="similarity">
    <text evidence="1">Belongs to the MurCDEF family.</text>
</comment>